<feature type="chain" id="PRO_1000129720" description="Co-chaperonin GroES">
    <location>
        <begin position="1"/>
        <end position="92"/>
    </location>
</feature>
<sequence length="92" mass="10347">MMKVIPLGERLLIKPIKEEKKTEGGIVLPDSAKEKPMKAEVVAVGKIDDEEKFDIKVGDKVIYSKYAGTEIKIDDEDYIIIDVNDILAKIEE</sequence>
<keyword id="KW-0143">Chaperone</keyword>
<keyword id="KW-0963">Cytoplasm</keyword>
<organism>
    <name type="scientific">Thermotoga sp. (strain RQ2)</name>
    <dbReference type="NCBI Taxonomy" id="126740"/>
    <lineage>
        <taxon>Bacteria</taxon>
        <taxon>Thermotogati</taxon>
        <taxon>Thermotogota</taxon>
        <taxon>Thermotogae</taxon>
        <taxon>Thermotogales</taxon>
        <taxon>Thermotogaceae</taxon>
        <taxon>Thermotoga</taxon>
    </lineage>
</organism>
<reference key="1">
    <citation type="journal article" date="2011" name="J. Bacteriol.">
        <title>Genome sequence of Thermotoga sp. strain RQ2, a hyperthermophilic bacterium isolated from a geothermally heated region of the seafloor near Ribeira Quente, the Azores.</title>
        <authorList>
            <person name="Swithers K.S."/>
            <person name="DiPippo J.L."/>
            <person name="Bruce D.C."/>
            <person name="Detter C."/>
            <person name="Tapia R."/>
            <person name="Han S."/>
            <person name="Saunders E."/>
            <person name="Goodwin L.A."/>
            <person name="Han J."/>
            <person name="Woyke T."/>
            <person name="Pitluck S."/>
            <person name="Pennacchio L."/>
            <person name="Nolan M."/>
            <person name="Mikhailova N."/>
            <person name="Lykidis A."/>
            <person name="Land M.L."/>
            <person name="Brettin T."/>
            <person name="Stetter K.O."/>
            <person name="Nelson K.E."/>
            <person name="Gogarten J.P."/>
            <person name="Noll K.M."/>
        </authorList>
    </citation>
    <scope>NUCLEOTIDE SEQUENCE [LARGE SCALE GENOMIC DNA]</scope>
    <source>
        <strain>RQ2</strain>
    </source>
</reference>
<proteinExistence type="inferred from homology"/>
<name>CH10_THESQ</name>
<accession>B1L8Y9</accession>
<gene>
    <name evidence="1" type="primary">groES</name>
    <name evidence="1" type="synonym">groS</name>
    <name type="ordered locus">TRQ2_0431</name>
</gene>
<dbReference type="EMBL" id="CP000969">
    <property type="protein sequence ID" value="ACB08787.1"/>
    <property type="molecule type" value="Genomic_DNA"/>
</dbReference>
<dbReference type="SMR" id="B1L8Y9"/>
<dbReference type="KEGG" id="trq:TRQ2_0431"/>
<dbReference type="HOGENOM" id="CLU_132825_2_0_0"/>
<dbReference type="Proteomes" id="UP000001687">
    <property type="component" value="Chromosome"/>
</dbReference>
<dbReference type="GO" id="GO:0005737">
    <property type="term" value="C:cytoplasm"/>
    <property type="evidence" value="ECO:0007669"/>
    <property type="project" value="UniProtKB-SubCell"/>
</dbReference>
<dbReference type="GO" id="GO:0005524">
    <property type="term" value="F:ATP binding"/>
    <property type="evidence" value="ECO:0007669"/>
    <property type="project" value="InterPro"/>
</dbReference>
<dbReference type="GO" id="GO:0046872">
    <property type="term" value="F:metal ion binding"/>
    <property type="evidence" value="ECO:0007669"/>
    <property type="project" value="TreeGrafter"/>
</dbReference>
<dbReference type="GO" id="GO:0044183">
    <property type="term" value="F:protein folding chaperone"/>
    <property type="evidence" value="ECO:0007669"/>
    <property type="project" value="InterPro"/>
</dbReference>
<dbReference type="GO" id="GO:0051087">
    <property type="term" value="F:protein-folding chaperone binding"/>
    <property type="evidence" value="ECO:0007669"/>
    <property type="project" value="TreeGrafter"/>
</dbReference>
<dbReference type="GO" id="GO:0051082">
    <property type="term" value="F:unfolded protein binding"/>
    <property type="evidence" value="ECO:0007669"/>
    <property type="project" value="TreeGrafter"/>
</dbReference>
<dbReference type="GO" id="GO:0051085">
    <property type="term" value="P:chaperone cofactor-dependent protein refolding"/>
    <property type="evidence" value="ECO:0007669"/>
    <property type="project" value="TreeGrafter"/>
</dbReference>
<dbReference type="CDD" id="cd00320">
    <property type="entry name" value="cpn10"/>
    <property type="match status" value="1"/>
</dbReference>
<dbReference type="FunFam" id="2.30.33.40:FF:000001">
    <property type="entry name" value="10 kDa chaperonin"/>
    <property type="match status" value="1"/>
</dbReference>
<dbReference type="Gene3D" id="2.30.33.40">
    <property type="entry name" value="GroES chaperonin"/>
    <property type="match status" value="1"/>
</dbReference>
<dbReference type="HAMAP" id="MF_00580">
    <property type="entry name" value="CH10"/>
    <property type="match status" value="1"/>
</dbReference>
<dbReference type="InterPro" id="IPR020818">
    <property type="entry name" value="Chaperonin_GroES"/>
</dbReference>
<dbReference type="InterPro" id="IPR037124">
    <property type="entry name" value="Chaperonin_GroES_sf"/>
</dbReference>
<dbReference type="InterPro" id="IPR018369">
    <property type="entry name" value="Chaprnonin_Cpn10_CS"/>
</dbReference>
<dbReference type="InterPro" id="IPR011032">
    <property type="entry name" value="GroES-like_sf"/>
</dbReference>
<dbReference type="NCBIfam" id="NF001531">
    <property type="entry name" value="PRK00364.2-2"/>
    <property type="match status" value="1"/>
</dbReference>
<dbReference type="NCBIfam" id="NF011106">
    <property type="entry name" value="PRK14533.1"/>
    <property type="match status" value="1"/>
</dbReference>
<dbReference type="PANTHER" id="PTHR10772">
    <property type="entry name" value="10 KDA HEAT SHOCK PROTEIN"/>
    <property type="match status" value="1"/>
</dbReference>
<dbReference type="PANTHER" id="PTHR10772:SF63">
    <property type="entry name" value="20 KDA CHAPERONIN, CHLOROPLASTIC"/>
    <property type="match status" value="1"/>
</dbReference>
<dbReference type="Pfam" id="PF00166">
    <property type="entry name" value="Cpn10"/>
    <property type="match status" value="1"/>
</dbReference>
<dbReference type="PRINTS" id="PR00297">
    <property type="entry name" value="CHAPERONIN10"/>
</dbReference>
<dbReference type="SMART" id="SM00883">
    <property type="entry name" value="Cpn10"/>
    <property type="match status" value="1"/>
</dbReference>
<dbReference type="SUPFAM" id="SSF50129">
    <property type="entry name" value="GroES-like"/>
    <property type="match status" value="1"/>
</dbReference>
<dbReference type="PROSITE" id="PS00681">
    <property type="entry name" value="CHAPERONINS_CPN10"/>
    <property type="match status" value="1"/>
</dbReference>
<comment type="function">
    <text evidence="1">Together with the chaperonin GroEL, plays an essential role in assisting protein folding. The GroEL-GroES system forms a nano-cage that allows encapsulation of the non-native substrate proteins and provides a physical environment optimized to promote and accelerate protein folding. GroES binds to the apical surface of the GroEL ring, thereby capping the opening of the GroEL channel.</text>
</comment>
<comment type="subunit">
    <text evidence="1">Heptamer of 7 subunits arranged in a ring. Interacts with the chaperonin GroEL.</text>
</comment>
<comment type="subcellular location">
    <subcellularLocation>
        <location evidence="1">Cytoplasm</location>
    </subcellularLocation>
</comment>
<comment type="similarity">
    <text evidence="1">Belongs to the GroES chaperonin family.</text>
</comment>
<evidence type="ECO:0000255" key="1">
    <source>
        <dbReference type="HAMAP-Rule" id="MF_00580"/>
    </source>
</evidence>
<protein>
    <recommendedName>
        <fullName evidence="1">Co-chaperonin GroES</fullName>
    </recommendedName>
    <alternativeName>
        <fullName evidence="1">10 kDa chaperonin</fullName>
    </alternativeName>
    <alternativeName>
        <fullName evidence="1">Chaperonin-10</fullName>
        <shortName evidence="1">Cpn10</shortName>
    </alternativeName>
</protein>